<protein>
    <recommendedName>
        <fullName evidence="7">Cytochrome P450 monooxygenase eqxH</fullName>
        <ecNumber evidence="9">1.-.-.-</ecNumber>
    </recommendedName>
    <alternativeName>
        <fullName evidence="7">Equisetin biosynthesis protein H</fullName>
    </alternativeName>
</protein>
<keyword id="KW-0325">Glycoprotein</keyword>
<keyword id="KW-0349">Heme</keyword>
<keyword id="KW-0408">Iron</keyword>
<keyword id="KW-0472">Membrane</keyword>
<keyword id="KW-0479">Metal-binding</keyword>
<keyword id="KW-0503">Monooxygenase</keyword>
<keyword id="KW-0560">Oxidoreductase</keyword>
<keyword id="KW-0812">Transmembrane</keyword>
<keyword id="KW-1133">Transmembrane helix</keyword>
<comment type="function">
    <text evidence="1 5 6">Cytochrome P450 monooxygenase; part of the gene cluster that mediates the biosynthesis of equisetin, a trans-fused decalin-containing tetramic acid with antimicrobial activity (PubMed:23614392). The PKS module of eqxS together with the enoylreductase eqxC catalyze the formation of the polyketide unit which is then conjugated to L-serine by the condensation domain of the eqxS NRPS module (PubMed:23614392). Activity of the Dieckmann cyclase domain (RED) results in release of the Dieckmann product intermediate (PubMed:18652469, PubMed:23614392). Diels-Alderase eqx3 is involved in endo-selective Diels-Alder cycloaddition to form the decalin ring, leading to the production of N-desmethylequisetin also called trichosetin (By similarity). Subsequent N-methylation is carried out by eqxD to give equisetin (PubMed:23614392).</text>
</comment>
<comment type="cofactor">
    <cofactor evidence="2">
        <name>heme</name>
        <dbReference type="ChEBI" id="CHEBI:30413"/>
    </cofactor>
</comment>
<comment type="pathway">
    <text evidence="9">Mycotoxin biosynthesis.</text>
</comment>
<comment type="subcellular location">
    <subcellularLocation>
        <location evidence="3">Membrane</location>
        <topology evidence="3">Single-pass membrane protein</topology>
    </subcellularLocation>
</comment>
<comment type="similarity">
    <text evidence="8">Belongs to the cytochrome P450 family.</text>
</comment>
<evidence type="ECO:0000250" key="1">
    <source>
        <dbReference type="UniProtKB" id="A0A0E4AZP0"/>
    </source>
</evidence>
<evidence type="ECO:0000250" key="2">
    <source>
        <dbReference type="UniProtKB" id="P04798"/>
    </source>
</evidence>
<evidence type="ECO:0000255" key="3"/>
<evidence type="ECO:0000255" key="4">
    <source>
        <dbReference type="PROSITE-ProRule" id="PRU00498"/>
    </source>
</evidence>
<evidence type="ECO:0000269" key="5">
    <source>
    </source>
</evidence>
<evidence type="ECO:0000269" key="6">
    <source>
    </source>
</evidence>
<evidence type="ECO:0000303" key="7">
    <source>
    </source>
</evidence>
<evidence type="ECO:0000305" key="8"/>
<evidence type="ECO:0000305" key="9">
    <source>
    </source>
</evidence>
<gene>
    <name evidence="7" type="primary">eqxH</name>
</gene>
<proteinExistence type="inferred from homology"/>
<organism>
    <name type="scientific">Fusarium heterosporum</name>
    <dbReference type="NCBI Taxonomy" id="42747"/>
    <lineage>
        <taxon>Eukaryota</taxon>
        <taxon>Fungi</taxon>
        <taxon>Dikarya</taxon>
        <taxon>Ascomycota</taxon>
        <taxon>Pezizomycotina</taxon>
        <taxon>Sordariomycetes</taxon>
        <taxon>Hypocreomycetidae</taxon>
        <taxon>Hypocreales</taxon>
        <taxon>Nectriaceae</taxon>
        <taxon>Fusarium</taxon>
        <taxon>Fusarium heterosporum species complex</taxon>
    </lineage>
</organism>
<dbReference type="EC" id="1.-.-.-" evidence="9"/>
<dbReference type="EMBL" id="KC439347">
    <property type="protein sequence ID" value="AGO86661.1"/>
    <property type="molecule type" value="Genomic_DNA"/>
</dbReference>
<dbReference type="SMR" id="S4W283"/>
<dbReference type="GlyCosmos" id="S4W283">
    <property type="glycosylation" value="2 sites, No reported glycans"/>
</dbReference>
<dbReference type="GO" id="GO:0016020">
    <property type="term" value="C:membrane"/>
    <property type="evidence" value="ECO:0007669"/>
    <property type="project" value="UniProtKB-SubCell"/>
</dbReference>
<dbReference type="GO" id="GO:0020037">
    <property type="term" value="F:heme binding"/>
    <property type="evidence" value="ECO:0007669"/>
    <property type="project" value="InterPro"/>
</dbReference>
<dbReference type="GO" id="GO:0005506">
    <property type="term" value="F:iron ion binding"/>
    <property type="evidence" value="ECO:0007669"/>
    <property type="project" value="InterPro"/>
</dbReference>
<dbReference type="GO" id="GO:0004497">
    <property type="term" value="F:monooxygenase activity"/>
    <property type="evidence" value="ECO:0007669"/>
    <property type="project" value="UniProtKB-KW"/>
</dbReference>
<dbReference type="GO" id="GO:0016705">
    <property type="term" value="F:oxidoreductase activity, acting on paired donors, with incorporation or reduction of molecular oxygen"/>
    <property type="evidence" value="ECO:0007669"/>
    <property type="project" value="InterPro"/>
</dbReference>
<dbReference type="GO" id="GO:0019748">
    <property type="term" value="P:secondary metabolic process"/>
    <property type="evidence" value="ECO:0007669"/>
    <property type="project" value="UniProtKB-ARBA"/>
</dbReference>
<dbReference type="CDD" id="cd11041">
    <property type="entry name" value="CYP503A1-like"/>
    <property type="match status" value="1"/>
</dbReference>
<dbReference type="Gene3D" id="1.10.630.10">
    <property type="entry name" value="Cytochrome P450"/>
    <property type="match status" value="1"/>
</dbReference>
<dbReference type="InterPro" id="IPR001128">
    <property type="entry name" value="Cyt_P450"/>
</dbReference>
<dbReference type="InterPro" id="IPR017972">
    <property type="entry name" value="Cyt_P450_CS"/>
</dbReference>
<dbReference type="InterPro" id="IPR002403">
    <property type="entry name" value="Cyt_P450_E_grp-IV"/>
</dbReference>
<dbReference type="InterPro" id="IPR036396">
    <property type="entry name" value="Cyt_P450_sf"/>
</dbReference>
<dbReference type="PANTHER" id="PTHR46206">
    <property type="entry name" value="CYTOCHROME P450"/>
    <property type="match status" value="1"/>
</dbReference>
<dbReference type="PANTHER" id="PTHR46206:SF2">
    <property type="entry name" value="CYTOCHROME P450 MONOOXYGENASE AUSG-RELATED"/>
    <property type="match status" value="1"/>
</dbReference>
<dbReference type="Pfam" id="PF00067">
    <property type="entry name" value="p450"/>
    <property type="match status" value="1"/>
</dbReference>
<dbReference type="PRINTS" id="PR00465">
    <property type="entry name" value="EP450IV"/>
</dbReference>
<dbReference type="PRINTS" id="PR00385">
    <property type="entry name" value="P450"/>
</dbReference>
<dbReference type="SUPFAM" id="SSF48264">
    <property type="entry name" value="Cytochrome P450"/>
    <property type="match status" value="1"/>
</dbReference>
<dbReference type="PROSITE" id="PS00086">
    <property type="entry name" value="CYTOCHROME_P450"/>
    <property type="match status" value="1"/>
</dbReference>
<sequence>MSTKLDTILENPQYAILCGITVFTLFIVQLSLFDRGRNYPLLNPKGSFEISTNRVVREFISDSRNLLEKGKSLFKGQPYRANTDWGEVVVIPPQFLDALKSHKDLDFTIPAQDDSHCYIPGFEPFDADPNLSKVVIKYLTKALNRVTGPLSEEASIAFRTVISDSPEWHEIQPQPAFVRIISRMSSRVFMGEELCRNEEWVKLAGDYTVQSFKTGDELRMYPRWSRPFVHHFLPSCKEVRRTLNAARNCLNPLLERRNAIKAEAKAKGEPCPYDNSFEWFEKEYSTHDPAVAQLNLSLVAIHTTTDLLMETVFNIAQHPELLAPLREEIVRVLSTEGLKKTALLNLKLMDSVLKESQRLRPALLGSFRRLAMADVTLPNGDVIKKGTKIVCSTSHMWSADSHESGEEFDGYRFLRMREKEETEQGKTSHPHLVSPSSDHLGFGFGNHACPGRFFAANELKIALCHMLLKYDWKLAKDAVPRSASFGMILMPDLRTKLLIRRRSEELDIDSVES</sequence>
<accession>S4W283</accession>
<reference key="1">
    <citation type="journal article" date="2013" name="ACS Chem. Biol.">
        <title>Two related pyrrolidinedione synthetase loci in Fusarium heterosporum ATCC 74349 produce divergent metabolites.</title>
        <authorList>
            <person name="Kakule T.B."/>
            <person name="Sardar D."/>
            <person name="Lin Z."/>
            <person name="Schmidt E.W."/>
        </authorList>
    </citation>
    <scope>NUCLEOTIDE SEQUENCE [GENOMIC DNA]</scope>
    <scope>FUNCTION</scope>
    <scope>PATHWAY</scope>
    <source>
        <strain>ATCC 74349 / MF6069</strain>
    </source>
</reference>
<reference key="2">
    <citation type="journal article" date="2008" name="J. Am. Chem. Soc.">
        <title>Thioesterase-like role for fungal PKS-NRPS hybrid reductive domains.</title>
        <authorList>
            <person name="Sims J.W."/>
            <person name="Schmidt E.W."/>
        </authorList>
    </citation>
    <scope>FUNCTION</scope>
</reference>
<name>EQXH_FUSHE</name>
<feature type="chain" id="PRO_0000441314" description="Cytochrome P450 monooxygenase eqxH">
    <location>
        <begin position="1"/>
        <end position="513"/>
    </location>
</feature>
<feature type="transmembrane region" description="Helical" evidence="3">
    <location>
        <begin position="13"/>
        <end position="32"/>
    </location>
</feature>
<feature type="binding site" description="axial binding residue" evidence="2">
    <location>
        <position position="449"/>
    </location>
    <ligand>
        <name>heme</name>
        <dbReference type="ChEBI" id="CHEBI:30413"/>
    </ligand>
    <ligandPart>
        <name>Fe</name>
        <dbReference type="ChEBI" id="CHEBI:18248"/>
    </ligandPart>
</feature>
<feature type="glycosylation site" description="N-linked (GlcNAc...) asparagine" evidence="4">
    <location>
        <position position="130"/>
    </location>
</feature>
<feature type="glycosylation site" description="N-linked (GlcNAc...) asparagine" evidence="4">
    <location>
        <position position="295"/>
    </location>
</feature>